<reference key="1">
    <citation type="journal article" date="2005" name="Nature">
        <title>The genome of the social amoeba Dictyostelium discoideum.</title>
        <authorList>
            <person name="Eichinger L."/>
            <person name="Pachebat J.A."/>
            <person name="Gloeckner G."/>
            <person name="Rajandream M.A."/>
            <person name="Sucgang R."/>
            <person name="Berriman M."/>
            <person name="Song J."/>
            <person name="Olsen R."/>
            <person name="Szafranski K."/>
            <person name="Xu Q."/>
            <person name="Tunggal B."/>
            <person name="Kummerfeld S."/>
            <person name="Madera M."/>
            <person name="Konfortov B.A."/>
            <person name="Rivero F."/>
            <person name="Bankier A.T."/>
            <person name="Lehmann R."/>
            <person name="Hamlin N."/>
            <person name="Davies R."/>
            <person name="Gaudet P."/>
            <person name="Fey P."/>
            <person name="Pilcher K."/>
            <person name="Chen G."/>
            <person name="Saunders D."/>
            <person name="Sodergren E.J."/>
            <person name="Davis P."/>
            <person name="Kerhornou A."/>
            <person name="Nie X."/>
            <person name="Hall N."/>
            <person name="Anjard C."/>
            <person name="Hemphill L."/>
            <person name="Bason N."/>
            <person name="Farbrother P."/>
            <person name="Desany B."/>
            <person name="Just E."/>
            <person name="Morio T."/>
            <person name="Rost R."/>
            <person name="Churcher C.M."/>
            <person name="Cooper J."/>
            <person name="Haydock S."/>
            <person name="van Driessche N."/>
            <person name="Cronin A."/>
            <person name="Goodhead I."/>
            <person name="Muzny D.M."/>
            <person name="Mourier T."/>
            <person name="Pain A."/>
            <person name="Lu M."/>
            <person name="Harper D."/>
            <person name="Lindsay R."/>
            <person name="Hauser H."/>
            <person name="James K.D."/>
            <person name="Quiles M."/>
            <person name="Madan Babu M."/>
            <person name="Saito T."/>
            <person name="Buchrieser C."/>
            <person name="Wardroper A."/>
            <person name="Felder M."/>
            <person name="Thangavelu M."/>
            <person name="Johnson D."/>
            <person name="Knights A."/>
            <person name="Loulseged H."/>
            <person name="Mungall K.L."/>
            <person name="Oliver K."/>
            <person name="Price C."/>
            <person name="Quail M.A."/>
            <person name="Urushihara H."/>
            <person name="Hernandez J."/>
            <person name="Rabbinowitsch E."/>
            <person name="Steffen D."/>
            <person name="Sanders M."/>
            <person name="Ma J."/>
            <person name="Kohara Y."/>
            <person name="Sharp S."/>
            <person name="Simmonds M.N."/>
            <person name="Spiegler S."/>
            <person name="Tivey A."/>
            <person name="Sugano S."/>
            <person name="White B."/>
            <person name="Walker D."/>
            <person name="Woodward J.R."/>
            <person name="Winckler T."/>
            <person name="Tanaka Y."/>
            <person name="Shaulsky G."/>
            <person name="Schleicher M."/>
            <person name="Weinstock G.M."/>
            <person name="Rosenthal A."/>
            <person name="Cox E.C."/>
            <person name="Chisholm R.L."/>
            <person name="Gibbs R.A."/>
            <person name="Loomis W.F."/>
            <person name="Platzer M."/>
            <person name="Kay R.R."/>
            <person name="Williams J.G."/>
            <person name="Dear P.H."/>
            <person name="Noegel A.A."/>
            <person name="Barrell B.G."/>
            <person name="Kuspa A."/>
        </authorList>
    </citation>
    <scope>NUCLEOTIDE SEQUENCE [LARGE SCALE GENOMIC DNA]</scope>
    <source>
        <strain>AX4</strain>
    </source>
</reference>
<proteinExistence type="inferred from homology"/>
<name>APC1_DICDI</name>
<comment type="function">
    <text evidence="1">Component of the anaphase promoting complex/cyclosome (APC/C), a cell cycle-regulated E3 ubiquitin-protein ligase complex that controls progression through mitosis and the G1 phase of the cell cycle.</text>
</comment>
<comment type="pathway">
    <text>Protein modification; protein ubiquitination.</text>
</comment>
<comment type="subunit">
    <text evidence="1">The APC/C is composed of at least 13 subunits that stay tightly associated throughout the cell cycle: anapc1, anapc2, anapc3, anapc4, anapc5, anapc6, anapc7, anapc8, anapc10, anapc11, cdc20, cdc26 and cdh1.</text>
</comment>
<comment type="subcellular location">
    <subcellularLocation>
        <location evidence="1">Nucleus</location>
    </subcellularLocation>
</comment>
<comment type="similarity">
    <text evidence="3">Belongs to the APC1 family.</text>
</comment>
<evidence type="ECO:0000250" key="1"/>
<evidence type="ECO:0000256" key="2">
    <source>
        <dbReference type="SAM" id="MobiDB-lite"/>
    </source>
</evidence>
<evidence type="ECO:0000305" key="3"/>
<sequence length="2269" mass="258585">MVSIINLGKVKPFGLSYIINSNNNNNNNDDDDYNNEIRESESSIPYEYYFCQNPLKSCFNEEQKILLQSENDETDEKGMILVNNSFFEEAQLFWYQNTVVWSSPFTVKKKFTLPLLLSSMIYPKINNAIWSHFPFLKDLSKQQQEQQQQQHHQQSEYTTSSINNDIDDYYKYLCVLHNQGLNIYNSIGNSYQIVLPCKVINIWSSKFGLLLERDSSLDSTLLAGRDRSEIPSIFSILNPLEELKPVLTFSKSNNNNNNNNEALQQEFFSDTNQTIVFSSTDYPILITYSNIENVHIIYQVSHVKPSSNAENDNTNNNNNNNNTNTNISNNQTINNENGTTTTIINNSSIVNTSKPIFNFNNVSVNDQSFDYSNINISSSSPPFSSRNNNNNNNISNNNNTNNNTNNNNTNNSTSMMQQSIQQQQQQQQQQENSSFKFLNEDKSYFFDDESEFIIKSEIIFEEVLKDSTRLKSNTKSKSIFITLDNNQKPLLCIEINSTLFCYNLFIDQKIKSTQSSSSNKNNNNNNDRNEGIEEKLKLEFSFSISSVQSSSPIFIESFYNNNEYTIPKGINQPFIPLPTHILVLNDHLLSVYWGPFKILDLPIDNNSNNNNNNNNNNNNNNNNNNNNNNNNNNNNNNNNKRKPLYIKDSTFNRVTIVYSDKEEIRFKITLGKSYLVSSCLGALSSFIPMNLLASIYQDFNDFHKFRINNLLNSNSNNNNNNNNSEEENDKEWISFQILLISLLEKSLLKRPTDADTNKKIKENNHIKKEENEDDWEFLLNSNYHKNYEKGLSFLSNLNISDSSKVYPSNNNNNNNNNNNNNNNNNNNNNNNNNNNNNNNNNNNNNNNNNNCNIFIESINDFNFKTSLNSFIESIDDIIIALHHQYEEFKILTFNINYIYKLSKFLIQLSLHLELFNYVDYYFRDFGDLIDFINQFKIKSKTSIDISSLKLQSLLNDDIFSIYKFVYNSFNENNSETQQQQQFNKEKFERNKLTKYHFKWIYKMKSLYSIQSKINDNNSNNKNNIKYISEKLIMKMVELDIKLEDLNSISFGLSLPLRESIKYCRSNPPIDWPLKAYSLIEREELIYKFNIDDVNNVKDGLKINSLLISGGKNKLLSNSTMNHGYNSLSTSITNTLSTASSSSNEMNSNSNITSINGQSNGLPMNSTTNQMNSHQINNNGGGGGGGDDHHHHHSNSTSFDLSKFYHGQDEFYKRITYLRFDTDQRIQEVYRLLSFSNRIQINHTQENGVSDHDYLSQLQSKLLLSVQRSISLPIACGMFTIRSIKPLPTETINIPPIILNGFVGGTKTNISLDPTMVQDNMMVWPEFHNGVAAGLKVSADQTEITNTWIIYNRPKQFNPSYSGLLMALGLQKRLSSLAFTKLFEYLASGHQLTSVGLLLGISCTKMGTMDMSIAKVLSVHIQSLHPPLSIDLDVPSYVQIAALMGIGLLYCQTSNRRMTEVLLMEIGRKPINDKPLDRDSYSLTAGMALGLVNLGKGANEGSLTDLHVEDRLRSFIGISKEDSFDHMSTFFNQSYSTPSISSNRNNNDLFNNGSNNNSSSNGGGGGGGGNNNGNNSNNGNNGSSQFKKSNTILESSKPNIDLTAPGAIIALSLIYLKTNNLKISNYLSIPDTTFGLNYIRPDLVLLRILGRNLILWDSIKPQFQWIIDSVPLVVRKNVTIDRNSEKVFQEHSNNNNNNNKSRSSSSLNDFESFILIFCNVIAGAAFSIGLKYAGSLNENAFSLLMDLIQLFRKRQVYLNKCLLKKKKIEPTFDKVMRVTTETCLNVVALSLSLVMAGSGNLETLKILRMLRSRIGNEITYGNHMAINMAIGFLFLGGGQYTLSTSNIAIASLVCSLYPRFPCSSTDNDYHLQAFRHLYFLAIDPRCLITRDVDTLAPCHVPIELTILNNDTMKLETKQLVTPCLIPELSSIRSISIKSPRYWNIFINRGFVDGGVDININNNNNNNNNNNNNNNNNNNNNNNNNNNNNNNNNNNKNILKNHPTIFLKRKIGHLPYTEDPEGFRSLSKSFPKSESISLYSSSKGFQKNKEEFLKSFISDPNLLAFAKHFCTNQSNEFEHFNTTILYECLTQDTPEVIPLLLLLNDIANNFEKYSNSNTTIVLENLRIIFKFYSKWNNGYYLNNNNNKNNNNDGWLIHSTFLDSISTKIDEHFEKHFLNEQSNKKLLSNYLLTGELPNSLSTSIKRKFASFISYYNLPNNKQFQSFKSLLNNNNNNNSNAIYQLWSSLGNQINFNSINKIIELSTLSFDEDS</sequence>
<keyword id="KW-0131">Cell cycle</keyword>
<keyword id="KW-0132">Cell division</keyword>
<keyword id="KW-0498">Mitosis</keyword>
<keyword id="KW-0539">Nucleus</keyword>
<keyword id="KW-1185">Reference proteome</keyword>
<keyword id="KW-0677">Repeat</keyword>
<keyword id="KW-0833">Ubl conjugation pathway</keyword>
<gene>
    <name type="primary">anapc1</name>
    <name type="synonym">apc1</name>
    <name type="ORF">DDB_G0285349</name>
</gene>
<protein>
    <recommendedName>
        <fullName>Anaphase-promoting complex subunit 1</fullName>
        <shortName>APC1</shortName>
    </recommendedName>
</protein>
<organism>
    <name type="scientific">Dictyostelium discoideum</name>
    <name type="common">Social amoeba</name>
    <dbReference type="NCBI Taxonomy" id="44689"/>
    <lineage>
        <taxon>Eukaryota</taxon>
        <taxon>Amoebozoa</taxon>
        <taxon>Evosea</taxon>
        <taxon>Eumycetozoa</taxon>
        <taxon>Dictyostelia</taxon>
        <taxon>Dictyosteliales</taxon>
        <taxon>Dictyosteliaceae</taxon>
        <taxon>Dictyostelium</taxon>
    </lineage>
</organism>
<feature type="chain" id="PRO_0000328275" description="Anaphase-promoting complex subunit 1">
    <location>
        <begin position="1"/>
        <end position="2269"/>
    </location>
</feature>
<feature type="repeat" description="PC 1">
    <location>
        <begin position="1440"/>
        <end position="1472"/>
    </location>
</feature>
<feature type="repeat" description="PC 2">
    <location>
        <begin position="1483"/>
        <end position="1520"/>
    </location>
</feature>
<feature type="repeat" description="PC 3">
    <location>
        <begin position="1605"/>
        <end position="1637"/>
    </location>
</feature>
<feature type="repeat" description="PC 4">
    <location>
        <begin position="1722"/>
        <end position="1756"/>
    </location>
</feature>
<feature type="repeat" description="PC 5">
    <location>
        <begin position="1792"/>
        <end position="1807"/>
    </location>
</feature>
<feature type="region of interest" description="Disordered" evidence="2">
    <location>
        <begin position="305"/>
        <end position="334"/>
    </location>
</feature>
<feature type="region of interest" description="Disordered" evidence="2">
    <location>
        <begin position="379"/>
        <end position="433"/>
    </location>
</feature>
<feature type="region of interest" description="Disordered" evidence="2">
    <location>
        <begin position="609"/>
        <end position="644"/>
    </location>
</feature>
<feature type="region of interest" description="Disordered" evidence="2">
    <location>
        <begin position="804"/>
        <end position="845"/>
    </location>
</feature>
<feature type="region of interest" description="Disordered" evidence="2">
    <location>
        <begin position="1136"/>
        <end position="1197"/>
    </location>
</feature>
<feature type="region of interest" description="Disordered" evidence="2">
    <location>
        <begin position="1535"/>
        <end position="1586"/>
    </location>
</feature>
<feature type="region of interest" description="Disordered" evidence="2">
    <location>
        <begin position="1960"/>
        <end position="1997"/>
    </location>
</feature>
<feature type="compositionally biased region" description="Low complexity" evidence="2">
    <location>
        <begin position="306"/>
        <end position="334"/>
    </location>
</feature>
<feature type="compositionally biased region" description="Low complexity" evidence="2">
    <location>
        <begin position="379"/>
        <end position="430"/>
    </location>
</feature>
<feature type="compositionally biased region" description="Low complexity" evidence="2">
    <location>
        <begin position="609"/>
        <end position="638"/>
    </location>
</feature>
<feature type="compositionally biased region" description="Low complexity" evidence="2">
    <location>
        <begin position="809"/>
        <end position="845"/>
    </location>
</feature>
<feature type="compositionally biased region" description="Low complexity" evidence="2">
    <location>
        <begin position="1136"/>
        <end position="1159"/>
    </location>
</feature>
<feature type="compositionally biased region" description="Polar residues" evidence="2">
    <location>
        <begin position="1160"/>
        <end position="1177"/>
    </location>
</feature>
<feature type="compositionally biased region" description="Low complexity" evidence="2">
    <location>
        <begin position="1540"/>
        <end position="1559"/>
    </location>
</feature>
<feature type="compositionally biased region" description="Gly residues" evidence="2">
    <location>
        <begin position="1560"/>
        <end position="1570"/>
    </location>
</feature>
<feature type="compositionally biased region" description="Low complexity" evidence="2">
    <location>
        <begin position="1571"/>
        <end position="1583"/>
    </location>
</feature>
<feature type="compositionally biased region" description="Low complexity" evidence="2">
    <location>
        <begin position="1960"/>
        <end position="1993"/>
    </location>
</feature>
<dbReference type="EMBL" id="AAFI02000079">
    <property type="protein sequence ID" value="EAL64749.1"/>
    <property type="molecule type" value="Genomic_DNA"/>
</dbReference>
<dbReference type="RefSeq" id="XP_638254.1">
    <property type="nucleotide sequence ID" value="XM_633162.1"/>
</dbReference>
<dbReference type="SMR" id="Q54NC6"/>
<dbReference type="FunCoup" id="Q54NC6">
    <property type="interactions" value="699"/>
</dbReference>
<dbReference type="STRING" id="44689.Q54NC6"/>
<dbReference type="GlyGen" id="Q54NC6">
    <property type="glycosylation" value="1 site"/>
</dbReference>
<dbReference type="PaxDb" id="44689-DDB0234263"/>
<dbReference type="EnsemblProtists" id="EAL64749">
    <property type="protein sequence ID" value="EAL64749"/>
    <property type="gene ID" value="DDB_G0285349"/>
</dbReference>
<dbReference type="GeneID" id="8625062"/>
<dbReference type="KEGG" id="ddi:DDB_G0285349"/>
<dbReference type="dictyBase" id="DDB_G0285349">
    <property type="gene designation" value="anapc1"/>
</dbReference>
<dbReference type="VEuPathDB" id="AmoebaDB:DDB_G0285349"/>
<dbReference type="eggNOG" id="KOG1858">
    <property type="taxonomic scope" value="Eukaryota"/>
</dbReference>
<dbReference type="HOGENOM" id="CLU_001202_1_0_1"/>
<dbReference type="InParanoid" id="Q54NC6"/>
<dbReference type="OMA" id="MQPPDSR"/>
<dbReference type="PhylomeDB" id="Q54NC6"/>
<dbReference type="Reactome" id="R-DDI-141430">
    <property type="pathway name" value="Inactivation of APC/C via direct inhibition of the APC/C complex"/>
</dbReference>
<dbReference type="Reactome" id="R-DDI-174048">
    <property type="pathway name" value="APC/C:Cdc20 mediated degradation of Cyclin B"/>
</dbReference>
<dbReference type="Reactome" id="R-DDI-174084">
    <property type="pathway name" value="Autodegradation of Cdh1 by Cdh1:APC/C"/>
</dbReference>
<dbReference type="Reactome" id="R-DDI-174154">
    <property type="pathway name" value="APC/C:Cdc20 mediated degradation of Securin"/>
</dbReference>
<dbReference type="Reactome" id="R-DDI-174178">
    <property type="pathway name" value="APC/C:Cdh1 mediated degradation of Cdc20 and other APC/C:Cdh1 targeted proteins in late mitosis/early G1"/>
</dbReference>
<dbReference type="Reactome" id="R-DDI-174184">
    <property type="pathway name" value="Cdc20:Phospho-APC/C mediated degradation of Cyclin A"/>
</dbReference>
<dbReference type="Reactome" id="R-DDI-176407">
    <property type="pathway name" value="Conversion from APC/C:Cdc20 to APC/C:Cdh1 in late anaphase"/>
</dbReference>
<dbReference type="Reactome" id="R-DDI-176408">
    <property type="pathway name" value="Regulation of APC/C activators between G1/S and early anaphase"/>
</dbReference>
<dbReference type="Reactome" id="R-DDI-176409">
    <property type="pathway name" value="APC/C:Cdc20 mediated degradation of mitotic proteins"/>
</dbReference>
<dbReference type="Reactome" id="R-DDI-176412">
    <property type="pathway name" value="Phosphorylation of the APC/C"/>
</dbReference>
<dbReference type="Reactome" id="R-DDI-179409">
    <property type="pathway name" value="APC-Cdc20 mediated degradation of Nek2A"/>
</dbReference>
<dbReference type="Reactome" id="R-DDI-2467813">
    <property type="pathway name" value="Separation of Sister Chromatids"/>
</dbReference>
<dbReference type="Reactome" id="R-DDI-2559582">
    <property type="pathway name" value="Senescence-Associated Secretory Phenotype (SASP)"/>
</dbReference>
<dbReference type="Reactome" id="R-DDI-69017">
    <property type="pathway name" value="CDK-mediated phosphorylation and removal of Cdc6"/>
</dbReference>
<dbReference type="Reactome" id="R-DDI-983168">
    <property type="pathway name" value="Antigen processing: Ubiquitination &amp; Proteasome degradation"/>
</dbReference>
<dbReference type="UniPathway" id="UPA00143"/>
<dbReference type="PRO" id="PR:Q54NC6"/>
<dbReference type="Proteomes" id="UP000002195">
    <property type="component" value="Chromosome 4"/>
</dbReference>
<dbReference type="GO" id="GO:0005680">
    <property type="term" value="C:anaphase-promoting complex"/>
    <property type="evidence" value="ECO:0000250"/>
    <property type="project" value="dictyBase"/>
</dbReference>
<dbReference type="GO" id="GO:0005634">
    <property type="term" value="C:nucleus"/>
    <property type="evidence" value="ECO:0000250"/>
    <property type="project" value="dictyBase"/>
</dbReference>
<dbReference type="GO" id="GO:0060090">
    <property type="term" value="F:molecular adaptor activity"/>
    <property type="evidence" value="ECO:0000318"/>
    <property type="project" value="GO_Central"/>
</dbReference>
<dbReference type="GO" id="GO:0031145">
    <property type="term" value="P:anaphase-promoting complex-dependent catabolic process"/>
    <property type="evidence" value="ECO:0000318"/>
    <property type="project" value="GO_Central"/>
</dbReference>
<dbReference type="GO" id="GO:0051301">
    <property type="term" value="P:cell division"/>
    <property type="evidence" value="ECO:0007669"/>
    <property type="project" value="UniProtKB-KW"/>
</dbReference>
<dbReference type="GO" id="GO:0007091">
    <property type="term" value="P:metaphase/anaphase transition of mitotic cell cycle"/>
    <property type="evidence" value="ECO:0000318"/>
    <property type="project" value="GO_Central"/>
</dbReference>
<dbReference type="GO" id="GO:0070979">
    <property type="term" value="P:protein K11-linked ubiquitination"/>
    <property type="evidence" value="ECO:0000318"/>
    <property type="project" value="GO_Central"/>
</dbReference>
<dbReference type="GO" id="GO:0016567">
    <property type="term" value="P:protein ubiquitination"/>
    <property type="evidence" value="ECO:0000305"/>
    <property type="project" value="dictyBase"/>
</dbReference>
<dbReference type="FunFam" id="1.25.10.10:FF:000211">
    <property type="entry name" value="Anaphase-promoting complex subunit 1"/>
    <property type="match status" value="1"/>
</dbReference>
<dbReference type="FunFam" id="1.25.10.10:FF:001839">
    <property type="entry name" value="Anaphase-promoting complex subunit 1"/>
    <property type="match status" value="1"/>
</dbReference>
<dbReference type="Gene3D" id="1.25.10.10">
    <property type="entry name" value="Leucine-rich Repeat Variant"/>
    <property type="match status" value="2"/>
</dbReference>
<dbReference type="InterPro" id="IPR024990">
    <property type="entry name" value="Apc1"/>
</dbReference>
<dbReference type="InterPro" id="IPR048971">
    <property type="entry name" value="Apc1_3rd"/>
</dbReference>
<dbReference type="InterPro" id="IPR041221">
    <property type="entry name" value="APC1_C"/>
</dbReference>
<dbReference type="InterPro" id="IPR046794">
    <property type="entry name" value="Apc1_MidN"/>
</dbReference>
<dbReference type="InterPro" id="IPR049255">
    <property type="entry name" value="Apc1_N"/>
</dbReference>
<dbReference type="InterPro" id="IPR011989">
    <property type="entry name" value="ARM-like"/>
</dbReference>
<dbReference type="PANTHER" id="PTHR12827:SF3">
    <property type="entry name" value="ANAPHASE-PROMOTING COMPLEX SUBUNIT 1"/>
    <property type="match status" value="1"/>
</dbReference>
<dbReference type="PANTHER" id="PTHR12827">
    <property type="entry name" value="MEIOTIC CHECKPOINT REGULATOR TSG24 FAMILY MEMBER"/>
    <property type="match status" value="1"/>
</dbReference>
<dbReference type="Pfam" id="PF12859">
    <property type="entry name" value="ANAPC1"/>
    <property type="match status" value="1"/>
</dbReference>
<dbReference type="Pfam" id="PF21282">
    <property type="entry name" value="APC1_3rd"/>
    <property type="match status" value="1"/>
</dbReference>
<dbReference type="Pfam" id="PF18122">
    <property type="entry name" value="APC1_C"/>
    <property type="match status" value="1"/>
</dbReference>
<dbReference type="Pfam" id="PF20518">
    <property type="entry name" value="Apc1_MidN"/>
    <property type="match status" value="2"/>
</dbReference>
<accession>Q54NC6</accession>